<feature type="chain" id="PRO_0000351012" description="ATP-dependent DNA helicase chl1">
    <location>
        <begin position="1"/>
        <end position="861"/>
    </location>
</feature>
<feature type="domain" description="Helicase ATP-binding" evidence="4">
    <location>
        <begin position="4"/>
        <end position="431"/>
    </location>
</feature>
<feature type="region of interest" description="Disordered" evidence="5">
    <location>
        <begin position="114"/>
        <end position="153"/>
    </location>
</feature>
<feature type="short sequence motif" description="DEAH box">
    <location>
        <begin position="379"/>
        <end position="382"/>
    </location>
</feature>
<feature type="compositionally biased region" description="Basic and acidic residues" evidence="5">
    <location>
        <begin position="114"/>
        <end position="132"/>
    </location>
</feature>
<feature type="binding site" evidence="4">
    <location>
        <begin position="39"/>
        <end position="46"/>
    </location>
    <ligand>
        <name>ATP</name>
        <dbReference type="ChEBI" id="CHEBI:30616"/>
    </ligand>
</feature>
<feature type="binding site" evidence="1">
    <location>
        <position position="265"/>
    </location>
    <ligand>
        <name>[4Fe-4S] cluster</name>
        <dbReference type="ChEBI" id="CHEBI:49883"/>
    </ligand>
</feature>
<feature type="binding site" evidence="1">
    <location>
        <position position="283"/>
    </location>
    <ligand>
        <name>[4Fe-4S] cluster</name>
        <dbReference type="ChEBI" id="CHEBI:49883"/>
    </ligand>
</feature>
<feature type="binding site" evidence="1">
    <location>
        <position position="297"/>
    </location>
    <ligand>
        <name>[4Fe-4S] cluster</name>
        <dbReference type="ChEBI" id="CHEBI:49883"/>
    </ligand>
</feature>
<feature type="binding site" evidence="1">
    <location>
        <position position="336"/>
    </location>
    <ligand>
        <name>[4Fe-4S] cluster</name>
        <dbReference type="ChEBI" id="CHEBI:49883"/>
    </ligand>
</feature>
<organism>
    <name type="scientific">Neosartorya fischeri (strain ATCC 1020 / DSM 3700 / CBS 544.65 / FGSC A1164 / JCM 1740 / NRRL 181 / WB 181)</name>
    <name type="common">Aspergillus fischerianus</name>
    <dbReference type="NCBI Taxonomy" id="331117"/>
    <lineage>
        <taxon>Eukaryota</taxon>
        <taxon>Fungi</taxon>
        <taxon>Dikarya</taxon>
        <taxon>Ascomycota</taxon>
        <taxon>Pezizomycotina</taxon>
        <taxon>Eurotiomycetes</taxon>
        <taxon>Eurotiomycetidae</taxon>
        <taxon>Eurotiales</taxon>
        <taxon>Aspergillaceae</taxon>
        <taxon>Aspergillus</taxon>
        <taxon>Aspergillus subgen. Fumigati</taxon>
    </lineage>
</organism>
<reference key="1">
    <citation type="journal article" date="2008" name="PLoS Genet.">
        <title>Genomic islands in the pathogenic filamentous fungus Aspergillus fumigatus.</title>
        <authorList>
            <person name="Fedorova N.D."/>
            <person name="Khaldi N."/>
            <person name="Joardar V.S."/>
            <person name="Maiti R."/>
            <person name="Amedeo P."/>
            <person name="Anderson M.J."/>
            <person name="Crabtree J."/>
            <person name="Silva J.C."/>
            <person name="Badger J.H."/>
            <person name="Albarraq A."/>
            <person name="Angiuoli S."/>
            <person name="Bussey H."/>
            <person name="Bowyer P."/>
            <person name="Cotty P.J."/>
            <person name="Dyer P.S."/>
            <person name="Egan A."/>
            <person name="Galens K."/>
            <person name="Fraser-Liggett C.M."/>
            <person name="Haas B.J."/>
            <person name="Inman J.M."/>
            <person name="Kent R."/>
            <person name="Lemieux S."/>
            <person name="Malavazi I."/>
            <person name="Orvis J."/>
            <person name="Roemer T."/>
            <person name="Ronning C.M."/>
            <person name="Sundaram J.P."/>
            <person name="Sutton G."/>
            <person name="Turner G."/>
            <person name="Venter J.C."/>
            <person name="White O.R."/>
            <person name="Whitty B.R."/>
            <person name="Youngman P."/>
            <person name="Wolfe K.H."/>
            <person name="Goldman G.H."/>
            <person name="Wortman J.R."/>
            <person name="Jiang B."/>
            <person name="Denning D.W."/>
            <person name="Nierman W.C."/>
        </authorList>
    </citation>
    <scope>NUCLEOTIDE SEQUENCE [LARGE SCALE GENOMIC DNA]</scope>
    <source>
        <strain>ATCC 1020 / DSM 3700 / CBS 544.65 / FGSC A1164 / JCM 1740 / NRRL 181 / WB 181</strain>
    </source>
</reference>
<dbReference type="EC" id="5.6.2.3" evidence="3"/>
<dbReference type="EMBL" id="DS027690">
    <property type="protein sequence ID" value="EAW21988.1"/>
    <property type="molecule type" value="Genomic_DNA"/>
</dbReference>
<dbReference type="RefSeq" id="XP_001263885.1">
    <property type="nucleotide sequence ID" value="XM_001263884.1"/>
</dbReference>
<dbReference type="SMR" id="A1D8E4"/>
<dbReference type="STRING" id="331117.A1D8E4"/>
<dbReference type="EnsemblFungi" id="EAW21988">
    <property type="protein sequence ID" value="EAW21988"/>
    <property type="gene ID" value="NFIA_071590"/>
</dbReference>
<dbReference type="GeneID" id="4590531"/>
<dbReference type="KEGG" id="nfi:NFIA_071590"/>
<dbReference type="VEuPathDB" id="FungiDB:NFIA_071590"/>
<dbReference type="eggNOG" id="KOG1133">
    <property type="taxonomic scope" value="Eukaryota"/>
</dbReference>
<dbReference type="HOGENOM" id="CLU_006515_2_0_1"/>
<dbReference type="OMA" id="QTHQFRD"/>
<dbReference type="OrthoDB" id="267079at2759"/>
<dbReference type="Proteomes" id="UP000006702">
    <property type="component" value="Unassembled WGS sequence"/>
</dbReference>
<dbReference type="GO" id="GO:0000785">
    <property type="term" value="C:chromatin"/>
    <property type="evidence" value="ECO:0007669"/>
    <property type="project" value="EnsemblFungi"/>
</dbReference>
<dbReference type="GO" id="GO:0005634">
    <property type="term" value="C:nucleus"/>
    <property type="evidence" value="ECO:0007669"/>
    <property type="project" value="UniProtKB-SubCell"/>
</dbReference>
<dbReference type="GO" id="GO:0005524">
    <property type="term" value="F:ATP binding"/>
    <property type="evidence" value="ECO:0007669"/>
    <property type="project" value="UniProtKB-KW"/>
</dbReference>
<dbReference type="GO" id="GO:0016887">
    <property type="term" value="F:ATP hydrolysis activity"/>
    <property type="evidence" value="ECO:0007669"/>
    <property type="project" value="RHEA"/>
</dbReference>
<dbReference type="GO" id="GO:0003677">
    <property type="term" value="F:DNA binding"/>
    <property type="evidence" value="ECO:0007669"/>
    <property type="project" value="UniProtKB-KW"/>
</dbReference>
<dbReference type="GO" id="GO:0003678">
    <property type="term" value="F:DNA helicase activity"/>
    <property type="evidence" value="ECO:0007669"/>
    <property type="project" value="EnsemblFungi"/>
</dbReference>
<dbReference type="GO" id="GO:0051536">
    <property type="term" value="F:iron-sulfur cluster binding"/>
    <property type="evidence" value="ECO:0007669"/>
    <property type="project" value="UniProtKB-KW"/>
</dbReference>
<dbReference type="GO" id="GO:0046872">
    <property type="term" value="F:metal ion binding"/>
    <property type="evidence" value="ECO:0007669"/>
    <property type="project" value="UniProtKB-KW"/>
</dbReference>
<dbReference type="GO" id="GO:0034085">
    <property type="term" value="P:establishment of sister chromatid cohesion"/>
    <property type="evidence" value="ECO:0007669"/>
    <property type="project" value="EnsemblFungi"/>
</dbReference>
<dbReference type="GO" id="GO:0036297">
    <property type="term" value="P:interstrand cross-link repair"/>
    <property type="evidence" value="ECO:0007669"/>
    <property type="project" value="EnsemblFungi"/>
</dbReference>
<dbReference type="GO" id="GO:0031571">
    <property type="term" value="P:mitotic G1 DNA damage checkpoint signaling"/>
    <property type="evidence" value="ECO:0007669"/>
    <property type="project" value="EnsemblFungi"/>
</dbReference>
<dbReference type="GO" id="GO:0007064">
    <property type="term" value="P:mitotic sister chromatid cohesion"/>
    <property type="evidence" value="ECO:0007669"/>
    <property type="project" value="EnsemblFungi"/>
</dbReference>
<dbReference type="CDD" id="cd18788">
    <property type="entry name" value="SF2_C_XPD"/>
    <property type="match status" value="1"/>
</dbReference>
<dbReference type="FunFam" id="3.40.50.300:FF:001372">
    <property type="entry name" value="ATP-dependent DNA helicase chl1"/>
    <property type="match status" value="1"/>
</dbReference>
<dbReference type="FunFam" id="3.40.50.300:FF:002774">
    <property type="entry name" value="ATP-dependent DNA helicase chl1"/>
    <property type="match status" value="1"/>
</dbReference>
<dbReference type="Gene3D" id="3.40.50.300">
    <property type="entry name" value="P-loop containing nucleotide triphosphate hydrolases"/>
    <property type="match status" value="3"/>
</dbReference>
<dbReference type="InterPro" id="IPR006555">
    <property type="entry name" value="ATP-dep_Helicase_C"/>
</dbReference>
<dbReference type="InterPro" id="IPR045028">
    <property type="entry name" value="DinG/Rad3-like"/>
</dbReference>
<dbReference type="InterPro" id="IPR002464">
    <property type="entry name" value="DNA/RNA_helicase_DEAH_CS"/>
</dbReference>
<dbReference type="InterPro" id="IPR014013">
    <property type="entry name" value="Helic_SF1/SF2_ATP-bd_DinG/Rad3"/>
</dbReference>
<dbReference type="InterPro" id="IPR006554">
    <property type="entry name" value="Helicase-like_DEXD_c2"/>
</dbReference>
<dbReference type="InterPro" id="IPR027417">
    <property type="entry name" value="P-loop_NTPase"/>
</dbReference>
<dbReference type="InterPro" id="IPR010614">
    <property type="entry name" value="RAD3-like_helicase_DEAD"/>
</dbReference>
<dbReference type="InterPro" id="IPR013020">
    <property type="entry name" value="Rad3/Chl1-like"/>
</dbReference>
<dbReference type="NCBIfam" id="TIGR00604">
    <property type="entry name" value="rad3"/>
    <property type="match status" value="1"/>
</dbReference>
<dbReference type="PANTHER" id="PTHR11472:SF41">
    <property type="entry name" value="ATP-DEPENDENT DNA HELICASE DDX11-RELATED"/>
    <property type="match status" value="1"/>
</dbReference>
<dbReference type="PANTHER" id="PTHR11472">
    <property type="entry name" value="DNA REPAIR DEAD HELICASE RAD3/XP-D SUBFAMILY MEMBER"/>
    <property type="match status" value="1"/>
</dbReference>
<dbReference type="Pfam" id="PF06733">
    <property type="entry name" value="DEAD_2"/>
    <property type="match status" value="1"/>
</dbReference>
<dbReference type="Pfam" id="PF13307">
    <property type="entry name" value="Helicase_C_2"/>
    <property type="match status" value="1"/>
</dbReference>
<dbReference type="SMART" id="SM00488">
    <property type="entry name" value="DEXDc2"/>
    <property type="match status" value="1"/>
</dbReference>
<dbReference type="SMART" id="SM00491">
    <property type="entry name" value="HELICc2"/>
    <property type="match status" value="1"/>
</dbReference>
<dbReference type="SUPFAM" id="SSF52540">
    <property type="entry name" value="P-loop containing nucleoside triphosphate hydrolases"/>
    <property type="match status" value="1"/>
</dbReference>
<dbReference type="PROSITE" id="PS00690">
    <property type="entry name" value="DEAH_ATP_HELICASE"/>
    <property type="match status" value="1"/>
</dbReference>
<dbReference type="PROSITE" id="PS51193">
    <property type="entry name" value="HELICASE_ATP_BIND_2"/>
    <property type="match status" value="1"/>
</dbReference>
<evidence type="ECO:0000250" key="1">
    <source>
        <dbReference type="UniProtKB" id="P18074"/>
    </source>
</evidence>
<evidence type="ECO:0000250" key="2">
    <source>
        <dbReference type="UniProtKB" id="P22516"/>
    </source>
</evidence>
<evidence type="ECO:0000250" key="3">
    <source>
        <dbReference type="UniProtKB" id="Q96FC9"/>
    </source>
</evidence>
<evidence type="ECO:0000255" key="4">
    <source>
        <dbReference type="PROSITE-ProRule" id="PRU00541"/>
    </source>
</evidence>
<evidence type="ECO:0000256" key="5">
    <source>
        <dbReference type="SAM" id="MobiDB-lite"/>
    </source>
</evidence>
<evidence type="ECO:0000305" key="6"/>
<protein>
    <recommendedName>
        <fullName evidence="2">ATP-dependent DNA helicase chl1</fullName>
        <ecNumber evidence="3">5.6.2.3</ecNumber>
    </recommendedName>
    <alternativeName>
        <fullName evidence="2">Chromosome loss protein 1</fullName>
    </alternativeName>
    <alternativeName>
        <fullName evidence="6">DNA 5'-3' helicase chl1</fullName>
    </alternativeName>
</protein>
<sequence length="861" mass="96660">MGSQPQNFNHPYSPYDIQLQFMRALYTCLEEGKVAVFESPTGTGKSLSLICGSMTWLREHKRKALQDTVNKASCSAGDDDGEPEWMLEFAKRESARAVTEKRRALEARLEKIKVEEEKQRHAHATDHPGEARKRQRLDTSSGDPGQEQDDQFILDDYDSDAEERITYSKKLGDISGLSTSTLELLERFKEQFSASAEDETGHEDDDVKIFYCSRTHSQLSQFSSELRRVKMPSSMPAELSTSDANTDDAEERVKHLTLGSRKNLCINPKVMSLGNATAINERCLELQQPGVAAEKRCPYLPSKEDEGQVLQFRDHTLATIKDIEDMGKLGKRMGICPYYASRSVLKHSEIVTLPYPLLLQRSARDALDLSIKNHVVIIDEAHNLMDAICNIHSVTITLSQLQTALSQLTTYARKHKARLKGKNRSYIAQIIRLISSIADHLRSTIGENLPAEGAVDPSDLMAGKGVDQINPYKLSRYLQESKLARKVDGYVEFSKDKNQQSDDKPSSPVLFLVQSFLLPLMNPSAEGRFFYLKFHDDIQLKYMLLDPTNHFREIVEDARAVILAGGTMSPMSDYRNHLFSYIAPSRLDTFSYGHVIPPENLIAHTLVNGVLGSEFDFTYDSRDSEKMILDLGRTVAMLCQAIPDGVVAFFPSYDYLSRILAIWRKPLVGEKGQTILSLIERKKSILYEGRDMGAKTEDLLQEYTRTIDSGQGALLLSVVGGKLSEGINFSDKLGRGVLIIGLPFPNIRSAVWQAKIQYVEQKTYNSSSGSEKDRLSIAKAAGKDFYENACMRAVNQCIGRAIRHRNDYAAIVMIDRRYEKANIQGKLPAWIKQSMLRRSVRRPASALAADLSNFFSGRSSG</sequence>
<proteinExistence type="inferred from homology"/>
<accession>A1D8E4</accession>
<comment type="function">
    <text evidence="2">ATP-dependent DNA helicase important for chromosome transmission and normal cell cycle progression in G(2)/M (By similarity). May have a role in changing DNA topology to allow the loading of proteins involved in maintaining sister chromatid cohesion in the vicinity of the centromeres (By similarity). Has a specific role in chromosome segregation during meiosis II (By similarity).</text>
</comment>
<comment type="catalytic activity">
    <reaction evidence="3">
        <text>Couples ATP hydrolysis with the unwinding of duplex DNA at the replication fork by translocating in the 5'-3' direction. This creates two antiparallel DNA single strands (ssDNA). The leading ssDNA polymer is the template for DNA polymerase III holoenzyme which synthesizes a continuous strand.</text>
        <dbReference type="EC" id="5.6.2.3"/>
    </reaction>
</comment>
<comment type="catalytic activity">
    <reaction evidence="3">
        <text>ATP + H2O = ADP + phosphate + H(+)</text>
        <dbReference type="Rhea" id="RHEA:13065"/>
        <dbReference type="ChEBI" id="CHEBI:15377"/>
        <dbReference type="ChEBI" id="CHEBI:15378"/>
        <dbReference type="ChEBI" id="CHEBI:30616"/>
        <dbReference type="ChEBI" id="CHEBI:43474"/>
        <dbReference type="ChEBI" id="CHEBI:456216"/>
        <dbReference type="EC" id="5.6.2.3"/>
    </reaction>
</comment>
<comment type="cofactor">
    <cofactor evidence="1">
        <name>[4Fe-4S] cluster</name>
        <dbReference type="ChEBI" id="CHEBI:49883"/>
    </cofactor>
    <text evidence="1">Binds 1 [4Fe-4S] cluster.</text>
</comment>
<comment type="subcellular location">
    <subcellularLocation>
        <location evidence="2">Nucleus</location>
    </subcellularLocation>
</comment>
<comment type="similarity">
    <text evidence="6">Belongs to the DEAD box helicase family. DEAH subfamily. DDX11/CHL1 sub-subfamily.</text>
</comment>
<keyword id="KW-0067">ATP-binding</keyword>
<keyword id="KW-0131">Cell cycle</keyword>
<keyword id="KW-0238">DNA-binding</keyword>
<keyword id="KW-0347">Helicase</keyword>
<keyword id="KW-0378">Hydrolase</keyword>
<keyword id="KW-0408">Iron</keyword>
<keyword id="KW-0411">Iron-sulfur</keyword>
<keyword id="KW-0413">Isomerase</keyword>
<keyword id="KW-0479">Metal-binding</keyword>
<keyword id="KW-0547">Nucleotide-binding</keyword>
<keyword id="KW-0539">Nucleus</keyword>
<keyword id="KW-1185">Reference proteome</keyword>
<gene>
    <name type="primary">chl1</name>
    <name type="ORF">NFIA_071590</name>
</gene>
<name>CHL1_NEOFI</name>